<accession>B9MCM4</accession>
<protein>
    <recommendedName>
        <fullName evidence="1">Glycine--tRNA ligase beta subunit</fullName>
        <ecNumber evidence="1">6.1.1.14</ecNumber>
    </recommendedName>
    <alternativeName>
        <fullName evidence="1">Glycyl-tRNA synthetase beta subunit</fullName>
        <shortName evidence="1">GlyRS</shortName>
    </alternativeName>
</protein>
<evidence type="ECO:0000255" key="1">
    <source>
        <dbReference type="HAMAP-Rule" id="MF_00255"/>
    </source>
</evidence>
<comment type="catalytic activity">
    <reaction evidence="1">
        <text>tRNA(Gly) + glycine + ATP = glycyl-tRNA(Gly) + AMP + diphosphate</text>
        <dbReference type="Rhea" id="RHEA:16013"/>
        <dbReference type="Rhea" id="RHEA-COMP:9664"/>
        <dbReference type="Rhea" id="RHEA-COMP:9683"/>
        <dbReference type="ChEBI" id="CHEBI:30616"/>
        <dbReference type="ChEBI" id="CHEBI:33019"/>
        <dbReference type="ChEBI" id="CHEBI:57305"/>
        <dbReference type="ChEBI" id="CHEBI:78442"/>
        <dbReference type="ChEBI" id="CHEBI:78522"/>
        <dbReference type="ChEBI" id="CHEBI:456215"/>
        <dbReference type="EC" id="6.1.1.14"/>
    </reaction>
</comment>
<comment type="subunit">
    <text evidence="1">Tetramer of two alpha and two beta subunits.</text>
</comment>
<comment type="subcellular location">
    <subcellularLocation>
        <location evidence="1">Cytoplasm</location>
    </subcellularLocation>
</comment>
<comment type="similarity">
    <text evidence="1">Belongs to the class-II aminoacyl-tRNA synthetase family.</text>
</comment>
<reference key="1">
    <citation type="submission" date="2009-01" db="EMBL/GenBank/DDBJ databases">
        <title>Complete sequence of Diaphorobacter sp. TPSY.</title>
        <authorList>
            <consortium name="US DOE Joint Genome Institute"/>
            <person name="Lucas S."/>
            <person name="Copeland A."/>
            <person name="Lapidus A."/>
            <person name="Glavina del Rio T."/>
            <person name="Tice H."/>
            <person name="Bruce D."/>
            <person name="Goodwin L."/>
            <person name="Pitluck S."/>
            <person name="Chertkov O."/>
            <person name="Brettin T."/>
            <person name="Detter J.C."/>
            <person name="Han C."/>
            <person name="Larimer F."/>
            <person name="Land M."/>
            <person name="Hauser L."/>
            <person name="Kyrpides N."/>
            <person name="Mikhailova N."/>
            <person name="Coates J.D."/>
        </authorList>
    </citation>
    <scope>NUCLEOTIDE SEQUENCE [LARGE SCALE GENOMIC DNA]</scope>
    <source>
        <strain>TPSY</strain>
    </source>
</reference>
<feature type="chain" id="PRO_1000197183" description="Glycine--tRNA ligase beta subunit">
    <location>
        <begin position="1"/>
        <end position="720"/>
    </location>
</feature>
<organism>
    <name type="scientific">Acidovorax ebreus (strain TPSY)</name>
    <name type="common">Diaphorobacter sp. (strain TPSY)</name>
    <dbReference type="NCBI Taxonomy" id="535289"/>
    <lineage>
        <taxon>Bacteria</taxon>
        <taxon>Pseudomonadati</taxon>
        <taxon>Pseudomonadota</taxon>
        <taxon>Betaproteobacteria</taxon>
        <taxon>Burkholderiales</taxon>
        <taxon>Comamonadaceae</taxon>
        <taxon>Diaphorobacter</taxon>
    </lineage>
</organism>
<dbReference type="EC" id="6.1.1.14" evidence="1"/>
<dbReference type="EMBL" id="CP001392">
    <property type="protein sequence ID" value="ACM32024.1"/>
    <property type="molecule type" value="Genomic_DNA"/>
</dbReference>
<dbReference type="RefSeq" id="WP_012655567.1">
    <property type="nucleotide sequence ID" value="NC_011992.1"/>
</dbReference>
<dbReference type="SMR" id="B9MCM4"/>
<dbReference type="KEGG" id="dia:Dtpsy_0544"/>
<dbReference type="eggNOG" id="COG0751">
    <property type="taxonomic scope" value="Bacteria"/>
</dbReference>
<dbReference type="HOGENOM" id="CLU_007220_2_2_4"/>
<dbReference type="Proteomes" id="UP000000450">
    <property type="component" value="Chromosome"/>
</dbReference>
<dbReference type="GO" id="GO:0005829">
    <property type="term" value="C:cytosol"/>
    <property type="evidence" value="ECO:0007669"/>
    <property type="project" value="TreeGrafter"/>
</dbReference>
<dbReference type="GO" id="GO:0004814">
    <property type="term" value="F:arginine-tRNA ligase activity"/>
    <property type="evidence" value="ECO:0007669"/>
    <property type="project" value="InterPro"/>
</dbReference>
<dbReference type="GO" id="GO:0005524">
    <property type="term" value="F:ATP binding"/>
    <property type="evidence" value="ECO:0007669"/>
    <property type="project" value="UniProtKB-UniRule"/>
</dbReference>
<dbReference type="GO" id="GO:0004820">
    <property type="term" value="F:glycine-tRNA ligase activity"/>
    <property type="evidence" value="ECO:0007669"/>
    <property type="project" value="UniProtKB-UniRule"/>
</dbReference>
<dbReference type="GO" id="GO:0006420">
    <property type="term" value="P:arginyl-tRNA aminoacylation"/>
    <property type="evidence" value="ECO:0007669"/>
    <property type="project" value="InterPro"/>
</dbReference>
<dbReference type="GO" id="GO:0006426">
    <property type="term" value="P:glycyl-tRNA aminoacylation"/>
    <property type="evidence" value="ECO:0007669"/>
    <property type="project" value="UniProtKB-UniRule"/>
</dbReference>
<dbReference type="HAMAP" id="MF_00255">
    <property type="entry name" value="Gly_tRNA_synth_beta"/>
    <property type="match status" value="1"/>
</dbReference>
<dbReference type="InterPro" id="IPR008909">
    <property type="entry name" value="DALR_anticod-bd"/>
</dbReference>
<dbReference type="InterPro" id="IPR015944">
    <property type="entry name" value="Gly-tRNA-synth_bsu"/>
</dbReference>
<dbReference type="InterPro" id="IPR006194">
    <property type="entry name" value="Gly-tRNA-synth_heterodimer"/>
</dbReference>
<dbReference type="NCBIfam" id="TIGR00211">
    <property type="entry name" value="glyS"/>
    <property type="match status" value="1"/>
</dbReference>
<dbReference type="PANTHER" id="PTHR30075:SF2">
    <property type="entry name" value="GLYCINE--TRNA LIGASE, CHLOROPLASTIC_MITOCHONDRIAL 2"/>
    <property type="match status" value="1"/>
</dbReference>
<dbReference type="PANTHER" id="PTHR30075">
    <property type="entry name" value="GLYCYL-TRNA SYNTHETASE"/>
    <property type="match status" value="1"/>
</dbReference>
<dbReference type="Pfam" id="PF05746">
    <property type="entry name" value="DALR_1"/>
    <property type="match status" value="1"/>
</dbReference>
<dbReference type="Pfam" id="PF02092">
    <property type="entry name" value="tRNA_synt_2f"/>
    <property type="match status" value="1"/>
</dbReference>
<dbReference type="PRINTS" id="PR01045">
    <property type="entry name" value="TRNASYNTHGB"/>
</dbReference>
<dbReference type="SUPFAM" id="SSF109604">
    <property type="entry name" value="HD-domain/PDEase-like"/>
    <property type="match status" value="1"/>
</dbReference>
<dbReference type="PROSITE" id="PS50861">
    <property type="entry name" value="AA_TRNA_LIGASE_II_GLYAB"/>
    <property type="match status" value="1"/>
</dbReference>
<sequence>MNHQNLLVELFVEELPPKALQKLGDAFAGVLLEQLQAQGLTSAHSQLTAFASPRRLAAHITEVLPAAADKAVSQKLMPVAVGLDASGQPTPALLKKLAALGADAASVPQLKRVHDGKAEVLFFESMAKGALLADGLQKALDEAIAKLPIPKVMRYQLQDGWTSVHFVRPAHGLVALHGSEVLVGVQALGLTAGNTTHGHRFEASVDPVVIQSADSYAEQLRSEGAVIASFAERRAEIARQLQAAADRVGGGVRPIDDDALLDEVTALVERPNVLVCEFEKDFLAVPQECLILTMKANQKYFPLLDAEGKLTHQFLVVSNISPQDASAVIQGNERVVRPRLADAKFFFDQDRKKTLVSRVDQLAKVVYHNKLGTQGERVERVRHIAKAIATQLFTALAQGNAALDSQEGEIAQDYLLTCVDNAALLAKTDLVTDMVGEFPELQGIMGGYYAVSDGLPDEVAHAIEDHYKPRFAGDALPRENVGVVVALADKLETLVGMFGIGNLPTGDRDPFALRRHALGVIRMLVEKELPLDLDALLASAVPAFGDKIEDTSAQLADFIYDRLAGSLREQGYSAQEVDAVIALRPQRLALVPRQIEAVRAFATLEQAPALAAANKRVTNILKKAGEVDPHVNEELLQEPAEKDLYAALQRFVPEANAQFDSGDYTASLQTLAVLRAPVDAFFDDVMVNAEELALRLNRQGLLKKLHMAMNRVADLSRLAV</sequence>
<name>SYGB_ACIET</name>
<gene>
    <name evidence="1" type="primary">glyS</name>
    <name type="ordered locus">Dtpsy_0544</name>
</gene>
<proteinExistence type="inferred from homology"/>
<keyword id="KW-0030">Aminoacyl-tRNA synthetase</keyword>
<keyword id="KW-0067">ATP-binding</keyword>
<keyword id="KW-0963">Cytoplasm</keyword>
<keyword id="KW-0436">Ligase</keyword>
<keyword id="KW-0547">Nucleotide-binding</keyword>
<keyword id="KW-0648">Protein biosynthesis</keyword>
<keyword id="KW-1185">Reference proteome</keyword>